<name>TREA_SHIF8</name>
<proteinExistence type="inferred from homology"/>
<organism>
    <name type="scientific">Shigella flexneri serotype 5b (strain 8401)</name>
    <dbReference type="NCBI Taxonomy" id="373384"/>
    <lineage>
        <taxon>Bacteria</taxon>
        <taxon>Pseudomonadati</taxon>
        <taxon>Pseudomonadota</taxon>
        <taxon>Gammaproteobacteria</taxon>
        <taxon>Enterobacterales</taxon>
        <taxon>Enterobacteriaceae</taxon>
        <taxon>Shigella</taxon>
    </lineage>
</organism>
<reference key="1">
    <citation type="journal article" date="2006" name="BMC Genomics">
        <title>Complete genome sequence of Shigella flexneri 5b and comparison with Shigella flexneri 2a.</title>
        <authorList>
            <person name="Nie H."/>
            <person name="Yang F."/>
            <person name="Zhang X."/>
            <person name="Yang J."/>
            <person name="Chen L."/>
            <person name="Wang J."/>
            <person name="Xiong Z."/>
            <person name="Peng J."/>
            <person name="Sun L."/>
            <person name="Dong J."/>
            <person name="Xue Y."/>
            <person name="Xu X."/>
            <person name="Chen S."/>
            <person name="Yao Z."/>
            <person name="Shen Y."/>
            <person name="Jin Q."/>
        </authorList>
    </citation>
    <scope>NUCLEOTIDE SEQUENCE [LARGE SCALE GENOMIC DNA]</scope>
    <source>
        <strain>8401</strain>
    </source>
</reference>
<comment type="function">
    <text evidence="1">Provides the cells with the ability to utilize trehalose at high osmolarity by splitting it into glucose molecules that can subsequently be taken up by the phosphotransferase-mediated uptake system.</text>
</comment>
<comment type="catalytic activity">
    <reaction evidence="1">
        <text>alpha,alpha-trehalose + H2O = alpha-D-glucose + beta-D-glucose</text>
        <dbReference type="Rhea" id="RHEA:32675"/>
        <dbReference type="ChEBI" id="CHEBI:15377"/>
        <dbReference type="ChEBI" id="CHEBI:15903"/>
        <dbReference type="ChEBI" id="CHEBI:16551"/>
        <dbReference type="ChEBI" id="CHEBI:17925"/>
        <dbReference type="EC" id="3.2.1.28"/>
    </reaction>
</comment>
<comment type="subunit">
    <text evidence="1">Monomer.</text>
</comment>
<comment type="subcellular location">
    <subcellularLocation>
        <location evidence="1">Periplasm</location>
    </subcellularLocation>
</comment>
<comment type="similarity">
    <text evidence="1">Belongs to the glycosyl hydrolase 37 family.</text>
</comment>
<gene>
    <name evidence="1" type="primary">treA</name>
    <name type="ordered locus">SFV_1211</name>
</gene>
<dbReference type="EC" id="3.2.1.28" evidence="1"/>
<dbReference type="EMBL" id="CP000266">
    <property type="protein sequence ID" value="ABF03417.1"/>
    <property type="molecule type" value="Genomic_DNA"/>
</dbReference>
<dbReference type="RefSeq" id="WP_000841752.1">
    <property type="nucleotide sequence ID" value="NC_008258.1"/>
</dbReference>
<dbReference type="SMR" id="Q0T5J8"/>
<dbReference type="CAZy" id="GH37">
    <property type="family name" value="Glycoside Hydrolase Family 37"/>
</dbReference>
<dbReference type="KEGG" id="sfv:SFV_1211"/>
<dbReference type="HOGENOM" id="CLU_006451_3_1_6"/>
<dbReference type="Proteomes" id="UP000000659">
    <property type="component" value="Chromosome"/>
</dbReference>
<dbReference type="GO" id="GO:0042597">
    <property type="term" value="C:periplasmic space"/>
    <property type="evidence" value="ECO:0007669"/>
    <property type="project" value="UniProtKB-SubCell"/>
</dbReference>
<dbReference type="GO" id="GO:0004555">
    <property type="term" value="F:alpha,alpha-trehalase activity"/>
    <property type="evidence" value="ECO:0007669"/>
    <property type="project" value="UniProtKB-UniRule"/>
</dbReference>
<dbReference type="GO" id="GO:0071474">
    <property type="term" value="P:cellular hyperosmotic response"/>
    <property type="evidence" value="ECO:0007669"/>
    <property type="project" value="InterPro"/>
</dbReference>
<dbReference type="GO" id="GO:0005993">
    <property type="term" value="P:trehalose catabolic process"/>
    <property type="evidence" value="ECO:0007669"/>
    <property type="project" value="InterPro"/>
</dbReference>
<dbReference type="FunFam" id="1.50.10.10:FF:000003">
    <property type="entry name" value="Cytoplasmic trehalase"/>
    <property type="match status" value="1"/>
</dbReference>
<dbReference type="Gene3D" id="1.50.10.10">
    <property type="match status" value="1"/>
</dbReference>
<dbReference type="HAMAP" id="MF_01060">
    <property type="entry name" value="Peripl_trehalase"/>
    <property type="match status" value="1"/>
</dbReference>
<dbReference type="InterPro" id="IPR008928">
    <property type="entry name" value="6-hairpin_glycosidase_sf"/>
</dbReference>
<dbReference type="InterPro" id="IPR012341">
    <property type="entry name" value="6hp_glycosidase-like_sf"/>
</dbReference>
<dbReference type="InterPro" id="IPR001661">
    <property type="entry name" value="Glyco_hydro_37"/>
</dbReference>
<dbReference type="InterPro" id="IPR018232">
    <property type="entry name" value="Glyco_hydro_37_CS"/>
</dbReference>
<dbReference type="InterPro" id="IPR023720">
    <property type="entry name" value="Trehalase_periplasmic"/>
</dbReference>
<dbReference type="NCBIfam" id="NF009773">
    <property type="entry name" value="PRK13270.1"/>
    <property type="match status" value="1"/>
</dbReference>
<dbReference type="NCBIfam" id="NF009774">
    <property type="entry name" value="PRK13271.1"/>
    <property type="match status" value="1"/>
</dbReference>
<dbReference type="PANTHER" id="PTHR23403">
    <property type="entry name" value="TREHALASE"/>
    <property type="match status" value="1"/>
</dbReference>
<dbReference type="PANTHER" id="PTHR23403:SF1">
    <property type="entry name" value="TREHALASE"/>
    <property type="match status" value="1"/>
</dbReference>
<dbReference type="Pfam" id="PF01204">
    <property type="entry name" value="Trehalase"/>
    <property type="match status" value="1"/>
</dbReference>
<dbReference type="PRINTS" id="PR00744">
    <property type="entry name" value="GLHYDRLASE37"/>
</dbReference>
<dbReference type="SUPFAM" id="SSF48208">
    <property type="entry name" value="Six-hairpin glycosidases"/>
    <property type="match status" value="1"/>
</dbReference>
<dbReference type="PROSITE" id="PS00927">
    <property type="entry name" value="TREHALASE_1"/>
    <property type="match status" value="1"/>
</dbReference>
<dbReference type="PROSITE" id="PS00928">
    <property type="entry name" value="TREHALASE_2"/>
    <property type="match status" value="1"/>
</dbReference>
<protein>
    <recommendedName>
        <fullName evidence="1">Periplasmic trehalase</fullName>
        <ecNumber evidence="1">3.2.1.28</ecNumber>
    </recommendedName>
    <alternativeName>
        <fullName evidence="1">Alpha,alpha-trehalase</fullName>
    </alternativeName>
    <alternativeName>
        <fullName evidence="1">Alpha,alpha-trehalose glucohydrolase</fullName>
    </alternativeName>
</protein>
<evidence type="ECO:0000255" key="1">
    <source>
        <dbReference type="HAMAP-Rule" id="MF_01060"/>
    </source>
</evidence>
<evidence type="ECO:0000256" key="2">
    <source>
        <dbReference type="SAM" id="MobiDB-lite"/>
    </source>
</evidence>
<sequence>MKSPAPSRPQKMALIPACIFLYFAALSVQAEETPVTPQPPDILLGPLFNDVQNAKLFPDQKTFADAVPNSDPLMILADYRMQQNQSGFDLRHFVNVNFTLPKEGEKYVPPEGQSLREHIDGLWPVLTRSTENTEKWDSLLPLPEPYVVPGGRFREVYYWDSYFTMLGLAESGHWDKVADMVANFAHEINTYGHIPNGNRSYYLSRSQPPFFALMVELLAQHEGDAALKQYLPQMQKEYAYWMDGVENLQAGQQEKRVVKLQDGTLLNRYWDDRDTPRPESWVEDIATAKSNPNRPATEIYRDLRSAAASGWDFSSRWMDNPQQLNTLRTTSIVPVDLNSLMFKMEKILARASKAAGDNAMANQYETLANARQKGIEKYLWNDQQGWYADYDLKSHKVRNQLTAAALFPLYVNAAAKDRANKMATATKTHLLQPGGLNTTSVKSGQQWDAPNGWAPLQWVATEGLQNYGQKEVAMDISWHFLTNVQHTYDREKKLVEKYDVSTTGTGGGGGEYPLQDGFGWTNGVTLKMLDLICPKEQPCDNVPATHPTVKSATTQPSTKEAQPTP</sequence>
<keyword id="KW-0326">Glycosidase</keyword>
<keyword id="KW-0378">Hydrolase</keyword>
<keyword id="KW-0574">Periplasm</keyword>
<keyword id="KW-0732">Signal</keyword>
<accession>Q0T5J8</accession>
<feature type="signal peptide" evidence="1">
    <location>
        <begin position="1"/>
        <end position="30"/>
    </location>
</feature>
<feature type="chain" id="PRO_1000064458" description="Periplasmic trehalase">
    <location>
        <begin position="31"/>
        <end position="565"/>
    </location>
</feature>
<feature type="region of interest" description="Disordered" evidence="2">
    <location>
        <begin position="540"/>
        <end position="565"/>
    </location>
</feature>
<feature type="compositionally biased region" description="Polar residues" evidence="2">
    <location>
        <begin position="548"/>
        <end position="565"/>
    </location>
</feature>
<feature type="active site" description="Proton donor/acceptor" evidence="1">
    <location>
        <position position="312"/>
    </location>
</feature>
<feature type="active site" description="Proton donor/acceptor" evidence="1">
    <location>
        <position position="496"/>
    </location>
</feature>
<feature type="binding site" evidence="1">
    <location>
        <position position="152"/>
    </location>
    <ligand>
        <name>substrate</name>
    </ligand>
</feature>
<feature type="binding site" evidence="1">
    <location>
        <begin position="159"/>
        <end position="160"/>
    </location>
    <ligand>
        <name>substrate</name>
    </ligand>
</feature>
<feature type="binding site" evidence="1">
    <location>
        <position position="196"/>
    </location>
    <ligand>
        <name>substrate</name>
    </ligand>
</feature>
<feature type="binding site" evidence="1">
    <location>
        <begin position="205"/>
        <end position="207"/>
    </location>
    <ligand>
        <name>substrate</name>
    </ligand>
</feature>
<feature type="binding site" evidence="1">
    <location>
        <begin position="277"/>
        <end position="279"/>
    </location>
    <ligand>
        <name>substrate</name>
    </ligand>
</feature>
<feature type="binding site" evidence="1">
    <location>
        <position position="310"/>
    </location>
    <ligand>
        <name>substrate</name>
    </ligand>
</feature>
<feature type="binding site" evidence="1">
    <location>
        <position position="511"/>
    </location>
    <ligand>
        <name>substrate</name>
    </ligand>
</feature>